<accession>Q66CH9</accession>
<dbReference type="EMBL" id="BX936398">
    <property type="protein sequence ID" value="CAH20664.1"/>
    <property type="molecule type" value="Genomic_DNA"/>
</dbReference>
<dbReference type="RefSeq" id="WP_002211315.1">
    <property type="nucleotide sequence ID" value="NZ_CP009712.1"/>
</dbReference>
<dbReference type="SMR" id="Q66CH9"/>
<dbReference type="KEGG" id="ypo:BZ17_1093"/>
<dbReference type="KEGG" id="yps:YPTB1424"/>
<dbReference type="PATRIC" id="fig|273123.14.peg.1160"/>
<dbReference type="Proteomes" id="UP000001011">
    <property type="component" value="Chromosome"/>
</dbReference>
<dbReference type="GO" id="GO:0005829">
    <property type="term" value="C:cytosol"/>
    <property type="evidence" value="ECO:0007669"/>
    <property type="project" value="TreeGrafter"/>
</dbReference>
<dbReference type="FunFam" id="2.20.25.10:FF:000002">
    <property type="entry name" value="UPF0434 protein YcaR"/>
    <property type="match status" value="1"/>
</dbReference>
<dbReference type="Gene3D" id="2.20.25.10">
    <property type="match status" value="1"/>
</dbReference>
<dbReference type="HAMAP" id="MF_01187">
    <property type="entry name" value="UPF0434"/>
    <property type="match status" value="1"/>
</dbReference>
<dbReference type="InterPro" id="IPR005651">
    <property type="entry name" value="Trm112-like"/>
</dbReference>
<dbReference type="PANTHER" id="PTHR33505:SF4">
    <property type="entry name" value="PROTEIN PREY, MITOCHONDRIAL"/>
    <property type="match status" value="1"/>
</dbReference>
<dbReference type="PANTHER" id="PTHR33505">
    <property type="entry name" value="ZGC:162634"/>
    <property type="match status" value="1"/>
</dbReference>
<dbReference type="Pfam" id="PF03966">
    <property type="entry name" value="Trm112p"/>
    <property type="match status" value="1"/>
</dbReference>
<dbReference type="SUPFAM" id="SSF158997">
    <property type="entry name" value="Trm112p-like"/>
    <property type="match status" value="1"/>
</dbReference>
<proteinExistence type="inferred from homology"/>
<organism>
    <name type="scientific">Yersinia pseudotuberculosis serotype I (strain IP32953)</name>
    <dbReference type="NCBI Taxonomy" id="273123"/>
    <lineage>
        <taxon>Bacteria</taxon>
        <taxon>Pseudomonadati</taxon>
        <taxon>Pseudomonadota</taxon>
        <taxon>Gammaproteobacteria</taxon>
        <taxon>Enterobacterales</taxon>
        <taxon>Yersiniaceae</taxon>
        <taxon>Yersinia</taxon>
    </lineage>
</organism>
<evidence type="ECO:0000255" key="1">
    <source>
        <dbReference type="HAMAP-Rule" id="MF_01187"/>
    </source>
</evidence>
<name>Y1424_YERPS</name>
<comment type="similarity">
    <text evidence="1">Belongs to the UPF0434 family.</text>
</comment>
<feature type="chain" id="PRO_0000291189" description="UPF0434 protein YPTB1424">
    <location>
        <begin position="1"/>
        <end position="60"/>
    </location>
</feature>
<sequence length="60" mass="6820">MDHRLLEIVACPVCNGKLYFNKENLELVCKVDNLAYPVRDGIPVLLENEARPLSIDEKHA</sequence>
<reference key="1">
    <citation type="journal article" date="2004" name="Proc. Natl. Acad. Sci. U.S.A.">
        <title>Insights into the evolution of Yersinia pestis through whole-genome comparison with Yersinia pseudotuberculosis.</title>
        <authorList>
            <person name="Chain P.S.G."/>
            <person name="Carniel E."/>
            <person name="Larimer F.W."/>
            <person name="Lamerdin J."/>
            <person name="Stoutland P.O."/>
            <person name="Regala W.M."/>
            <person name="Georgescu A.M."/>
            <person name="Vergez L.M."/>
            <person name="Land M.L."/>
            <person name="Motin V.L."/>
            <person name="Brubaker R.R."/>
            <person name="Fowler J."/>
            <person name="Hinnebusch J."/>
            <person name="Marceau M."/>
            <person name="Medigue C."/>
            <person name="Simonet M."/>
            <person name="Chenal-Francisque V."/>
            <person name="Souza B."/>
            <person name="Dacheux D."/>
            <person name="Elliott J.M."/>
            <person name="Derbise A."/>
            <person name="Hauser L.J."/>
            <person name="Garcia E."/>
        </authorList>
    </citation>
    <scope>NUCLEOTIDE SEQUENCE [LARGE SCALE GENOMIC DNA]</scope>
    <source>
        <strain>IP32953</strain>
    </source>
</reference>
<protein>
    <recommendedName>
        <fullName evidence="1">UPF0434 protein YPTB1424</fullName>
    </recommendedName>
</protein>
<gene>
    <name type="ordered locus">YPTB1424</name>
</gene>